<accession>Q5ZYP9</accession>
<protein>
    <recommendedName>
        <fullName evidence="1">DNA-directed RNA polymerase subunit beta'</fullName>
        <shortName evidence="1">RNAP subunit beta'</shortName>
        <ecNumber evidence="1">2.7.7.6</ecNumber>
    </recommendedName>
    <alternativeName>
        <fullName evidence="1">RNA polymerase subunit beta'</fullName>
    </alternativeName>
    <alternativeName>
        <fullName evidence="1">Transcriptase subunit beta'</fullName>
    </alternativeName>
</protein>
<dbReference type="EC" id="2.7.7.6" evidence="1"/>
<dbReference type="EMBL" id="AE017354">
    <property type="protein sequence ID" value="AAU26420.1"/>
    <property type="status" value="ALT_INIT"/>
    <property type="molecule type" value="Genomic_DNA"/>
</dbReference>
<dbReference type="RefSeq" id="WP_032802289.1">
    <property type="nucleotide sequence ID" value="NC_002942.5"/>
</dbReference>
<dbReference type="RefSeq" id="YP_094367.1">
    <property type="nucleotide sequence ID" value="NC_002942.5"/>
</dbReference>
<dbReference type="SMR" id="Q5ZYP9"/>
<dbReference type="STRING" id="272624.lpg0323"/>
<dbReference type="PaxDb" id="272624-lpg0323"/>
<dbReference type="GeneID" id="57034326"/>
<dbReference type="KEGG" id="lpn:lpg0323"/>
<dbReference type="PATRIC" id="fig|272624.6.peg.330"/>
<dbReference type="eggNOG" id="COG0086">
    <property type="taxonomic scope" value="Bacteria"/>
</dbReference>
<dbReference type="HOGENOM" id="CLU_000524_3_1_6"/>
<dbReference type="OrthoDB" id="9815296at2"/>
<dbReference type="Proteomes" id="UP000000609">
    <property type="component" value="Chromosome"/>
</dbReference>
<dbReference type="GO" id="GO:0000428">
    <property type="term" value="C:DNA-directed RNA polymerase complex"/>
    <property type="evidence" value="ECO:0007669"/>
    <property type="project" value="UniProtKB-KW"/>
</dbReference>
<dbReference type="GO" id="GO:0003677">
    <property type="term" value="F:DNA binding"/>
    <property type="evidence" value="ECO:0007669"/>
    <property type="project" value="UniProtKB-UniRule"/>
</dbReference>
<dbReference type="GO" id="GO:0003899">
    <property type="term" value="F:DNA-directed RNA polymerase activity"/>
    <property type="evidence" value="ECO:0007669"/>
    <property type="project" value="UniProtKB-UniRule"/>
</dbReference>
<dbReference type="GO" id="GO:0000287">
    <property type="term" value="F:magnesium ion binding"/>
    <property type="evidence" value="ECO:0007669"/>
    <property type="project" value="UniProtKB-UniRule"/>
</dbReference>
<dbReference type="GO" id="GO:0008270">
    <property type="term" value="F:zinc ion binding"/>
    <property type="evidence" value="ECO:0007669"/>
    <property type="project" value="UniProtKB-UniRule"/>
</dbReference>
<dbReference type="GO" id="GO:0006351">
    <property type="term" value="P:DNA-templated transcription"/>
    <property type="evidence" value="ECO:0007669"/>
    <property type="project" value="UniProtKB-UniRule"/>
</dbReference>
<dbReference type="CDD" id="cd02655">
    <property type="entry name" value="RNAP_beta'_C"/>
    <property type="match status" value="1"/>
</dbReference>
<dbReference type="CDD" id="cd01609">
    <property type="entry name" value="RNAP_beta'_N"/>
    <property type="match status" value="1"/>
</dbReference>
<dbReference type="FunFam" id="1.10.132.30:FF:000003">
    <property type="entry name" value="DNA-directed RNA polymerase subunit beta"/>
    <property type="match status" value="1"/>
</dbReference>
<dbReference type="FunFam" id="1.10.150.390:FF:000002">
    <property type="entry name" value="DNA-directed RNA polymerase subunit beta"/>
    <property type="match status" value="1"/>
</dbReference>
<dbReference type="FunFam" id="1.10.40.90:FF:000001">
    <property type="entry name" value="DNA-directed RNA polymerase subunit beta"/>
    <property type="match status" value="1"/>
</dbReference>
<dbReference type="Gene3D" id="1.10.132.30">
    <property type="match status" value="1"/>
</dbReference>
<dbReference type="Gene3D" id="1.10.150.390">
    <property type="match status" value="1"/>
</dbReference>
<dbReference type="Gene3D" id="1.10.1790.20">
    <property type="match status" value="1"/>
</dbReference>
<dbReference type="Gene3D" id="1.10.40.90">
    <property type="match status" value="1"/>
</dbReference>
<dbReference type="Gene3D" id="2.40.40.20">
    <property type="match status" value="1"/>
</dbReference>
<dbReference type="Gene3D" id="2.40.50.100">
    <property type="match status" value="3"/>
</dbReference>
<dbReference type="Gene3D" id="4.10.860.120">
    <property type="entry name" value="RNA polymerase II, clamp domain"/>
    <property type="match status" value="1"/>
</dbReference>
<dbReference type="Gene3D" id="1.10.274.100">
    <property type="entry name" value="RNA polymerase Rpb1, domain 3"/>
    <property type="match status" value="2"/>
</dbReference>
<dbReference type="HAMAP" id="MF_01322">
    <property type="entry name" value="RNApol_bact_RpoC"/>
    <property type="match status" value="1"/>
</dbReference>
<dbReference type="InterPro" id="IPR045867">
    <property type="entry name" value="DNA-dir_RpoC_beta_prime"/>
</dbReference>
<dbReference type="InterPro" id="IPR012754">
    <property type="entry name" value="DNA-dir_RpoC_beta_prime_bact"/>
</dbReference>
<dbReference type="InterPro" id="IPR000722">
    <property type="entry name" value="RNA_pol_asu"/>
</dbReference>
<dbReference type="InterPro" id="IPR006592">
    <property type="entry name" value="RNA_pol_N"/>
</dbReference>
<dbReference type="InterPro" id="IPR007080">
    <property type="entry name" value="RNA_pol_Rpb1_1"/>
</dbReference>
<dbReference type="InterPro" id="IPR007066">
    <property type="entry name" value="RNA_pol_Rpb1_3"/>
</dbReference>
<dbReference type="InterPro" id="IPR042102">
    <property type="entry name" value="RNA_pol_Rpb1_3_sf"/>
</dbReference>
<dbReference type="InterPro" id="IPR007083">
    <property type="entry name" value="RNA_pol_Rpb1_4"/>
</dbReference>
<dbReference type="InterPro" id="IPR007081">
    <property type="entry name" value="RNA_pol_Rpb1_5"/>
</dbReference>
<dbReference type="InterPro" id="IPR044893">
    <property type="entry name" value="RNA_pol_Rpb1_clamp_domain"/>
</dbReference>
<dbReference type="InterPro" id="IPR038120">
    <property type="entry name" value="Rpb1_funnel_sf"/>
</dbReference>
<dbReference type="NCBIfam" id="TIGR02386">
    <property type="entry name" value="rpoC_TIGR"/>
    <property type="match status" value="1"/>
</dbReference>
<dbReference type="PANTHER" id="PTHR19376">
    <property type="entry name" value="DNA-DIRECTED RNA POLYMERASE"/>
    <property type="match status" value="1"/>
</dbReference>
<dbReference type="PANTHER" id="PTHR19376:SF54">
    <property type="entry name" value="DNA-DIRECTED RNA POLYMERASE SUBUNIT BETA"/>
    <property type="match status" value="1"/>
</dbReference>
<dbReference type="Pfam" id="PF04997">
    <property type="entry name" value="RNA_pol_Rpb1_1"/>
    <property type="match status" value="1"/>
</dbReference>
<dbReference type="Pfam" id="PF00623">
    <property type="entry name" value="RNA_pol_Rpb1_2"/>
    <property type="match status" value="1"/>
</dbReference>
<dbReference type="Pfam" id="PF04983">
    <property type="entry name" value="RNA_pol_Rpb1_3"/>
    <property type="match status" value="1"/>
</dbReference>
<dbReference type="Pfam" id="PF05000">
    <property type="entry name" value="RNA_pol_Rpb1_4"/>
    <property type="match status" value="1"/>
</dbReference>
<dbReference type="Pfam" id="PF04998">
    <property type="entry name" value="RNA_pol_Rpb1_5"/>
    <property type="match status" value="1"/>
</dbReference>
<dbReference type="SMART" id="SM00663">
    <property type="entry name" value="RPOLA_N"/>
    <property type="match status" value="1"/>
</dbReference>
<dbReference type="SUPFAM" id="SSF64484">
    <property type="entry name" value="beta and beta-prime subunits of DNA dependent RNA-polymerase"/>
    <property type="match status" value="1"/>
</dbReference>
<reference key="1">
    <citation type="journal article" date="2004" name="Science">
        <title>The genomic sequence of the accidental pathogen Legionella pneumophila.</title>
        <authorList>
            <person name="Chien M."/>
            <person name="Morozova I."/>
            <person name="Shi S."/>
            <person name="Sheng H."/>
            <person name="Chen J."/>
            <person name="Gomez S.M."/>
            <person name="Asamani G."/>
            <person name="Hill K."/>
            <person name="Nuara J."/>
            <person name="Feder M."/>
            <person name="Rineer J."/>
            <person name="Greenberg J.J."/>
            <person name="Steshenko V."/>
            <person name="Park S.H."/>
            <person name="Zhao B."/>
            <person name="Teplitskaya E."/>
            <person name="Edwards J.R."/>
            <person name="Pampou S."/>
            <person name="Georghiou A."/>
            <person name="Chou I.-C."/>
            <person name="Iannuccilli W."/>
            <person name="Ulz M.E."/>
            <person name="Kim D.H."/>
            <person name="Geringer-Sameth A."/>
            <person name="Goldsberry C."/>
            <person name="Morozov P."/>
            <person name="Fischer S.G."/>
            <person name="Segal G."/>
            <person name="Qu X."/>
            <person name="Rzhetsky A."/>
            <person name="Zhang P."/>
            <person name="Cayanis E."/>
            <person name="De Jong P.J."/>
            <person name="Ju J."/>
            <person name="Kalachikov S."/>
            <person name="Shuman H.A."/>
            <person name="Russo J.J."/>
        </authorList>
    </citation>
    <scope>NUCLEOTIDE SEQUENCE [LARGE SCALE GENOMIC DNA]</scope>
    <source>
        <strain>Philadelphia 1 / ATCC 33152 / DSM 7513</strain>
    </source>
</reference>
<comment type="function">
    <text evidence="1">DNA-dependent RNA polymerase catalyzes the transcription of DNA into RNA using the four ribonucleoside triphosphates as substrates.</text>
</comment>
<comment type="catalytic activity">
    <reaction evidence="1">
        <text>RNA(n) + a ribonucleoside 5'-triphosphate = RNA(n+1) + diphosphate</text>
        <dbReference type="Rhea" id="RHEA:21248"/>
        <dbReference type="Rhea" id="RHEA-COMP:14527"/>
        <dbReference type="Rhea" id="RHEA-COMP:17342"/>
        <dbReference type="ChEBI" id="CHEBI:33019"/>
        <dbReference type="ChEBI" id="CHEBI:61557"/>
        <dbReference type="ChEBI" id="CHEBI:140395"/>
        <dbReference type="EC" id="2.7.7.6"/>
    </reaction>
</comment>
<comment type="cofactor">
    <cofactor evidence="1">
        <name>Mg(2+)</name>
        <dbReference type="ChEBI" id="CHEBI:18420"/>
    </cofactor>
    <text evidence="1">Binds 1 Mg(2+) ion per subunit.</text>
</comment>
<comment type="cofactor">
    <cofactor evidence="1">
        <name>Zn(2+)</name>
        <dbReference type="ChEBI" id="CHEBI:29105"/>
    </cofactor>
    <text evidence="1">Binds 2 Zn(2+) ions per subunit.</text>
</comment>
<comment type="subunit">
    <text evidence="1">The RNAP catalytic core consists of 2 alpha, 1 beta, 1 beta' and 1 omega subunit. When a sigma factor is associated with the core the holoenzyme is formed, which can initiate transcription.</text>
</comment>
<comment type="similarity">
    <text evidence="1">Belongs to the RNA polymerase beta' chain family.</text>
</comment>
<comment type="sequence caution" evidence="2">
    <conflict type="erroneous initiation">
        <sequence resource="EMBL-CDS" id="AAU26420"/>
    </conflict>
    <text>Extended N-terminus.</text>
</comment>
<evidence type="ECO:0000255" key="1">
    <source>
        <dbReference type="HAMAP-Rule" id="MF_01322"/>
    </source>
</evidence>
<evidence type="ECO:0000305" key="2"/>
<gene>
    <name evidence="1" type="primary">rpoC</name>
    <name type="ordered locus">lpg0323</name>
</gene>
<sequence length="1401" mass="155654">MSDLLGILKQQGQSEEFDAIKIALASPELIRSWSYGEVKKPETINYRTFKPERDGLFCAKTFGPVKDYECLCGKYKRLKHRGVICEKCGVELALAKVRRERMGHIELASPVAHIWFLKSLPSRIGLLLDMTLRDIERVLYFEAFVVVDPGMTELERGQLLNDEAYLDAMEQYGDEFDARMGAEAIRDLLRQIDLEDEIRNLREELPTTNSETKIKKITKRLKLLEAFYESGNKPEWMIMDVLPVLPPDLRPLVPLDGGRFATSDLNDLYRRVINRNNRLKRLLDLNAPDIIVRNEKRMLQESVDALLDNGRRGRAITGTNKRPLKSLADMIKGKQGRFRQNLLGKRVDYSGRSVIVVGPTLKLHQCGLPKKMALELFKPFIFSKLEFRGLATTIKAAKKMVEREESVVWDILDDVIREHPILLNRAPTLHRLGIQAFEPVLIEGKAIQLHPLVCTAYNADFDGDQMAVHVPLTLEAQLEARSLMMSTNNILSPASGEPIIVPSQDVVLGLYYLTREKVNALGEGKIYSSAQEAQNFYEAGHLDIHAKIKIRMPKEDGETGYHLVETTVGRAILAEILPKGMPFDYINRTMTKKVISKVIDSCYRKFGLKETVIFADQLMYTGFKYATRSGASIGIEDMEIPDDKASIIEHADNEVREIESQFRSGLVTNGERYNKVIDIWSRTNELVAKSMMSKIATEEVTDAKGNKVRQESFNPIFMMADSGARGSAAQIRQLAGMRGLMAAPDGSIIETPITANFREGLNVFQYFISTHGARKGLADTALKTANSGYLTRRLVDVAQDVVITEDDCGTDTGILMQPLIEGGDIVEPLHERVLGRVVASDVYIPTQTEPVVKAGTLLDEEWVEKLEKHGVDQVMVRSPITCQTRFGLCAKCYGRDLARGHLVNTGEAVGIIAAQSIGEPGTQLTMRTFHIGGAASRATAANNIQIKTKGVIRLHNIKTVTHENKNLVAVSRSGEVTIVDEFGRERERYKVPYGAVISAQDNSPVEAGQVIATWDPHTHPVISEVSGRLKFVDLIDGITMNRQTDELTGLSNIVIIDAKQRSAAGRDLRPMVKLVTDEGDDIYLAGTNVPAQYYLPVDAIVNFEDGSLVGIGDVIARIPQERSKTRDITGGLPRVADLFEARKPKDSAVMAEVSGLVNFGKETKGKRRLIINVSEDQCHEELIPKWRHISVFEGEHVERGEIIAEGALNPHDILRLLGVGALANYIVNEVQDVYRLQGVKINDKHIEVIVRQMLRKRVITFAGDSKFLVGEQVEESAMLQENDKLLAEGKQIARGTPILLGITKASLATESFISAASFQETTRVLTEAAVSGKVDELRGLKENVMVGRLIPAGTGYTYHQSRKAKRARVAAGGDSSATHTVTASDVEHALSEALNADNHEH</sequence>
<feature type="chain" id="PRO_0000225547" description="DNA-directed RNA polymerase subunit beta'">
    <location>
        <begin position="1"/>
        <end position="1401"/>
    </location>
</feature>
<feature type="binding site" evidence="1">
    <location>
        <position position="70"/>
    </location>
    <ligand>
        <name>Zn(2+)</name>
        <dbReference type="ChEBI" id="CHEBI:29105"/>
        <label>1</label>
    </ligand>
</feature>
<feature type="binding site" evidence="1">
    <location>
        <position position="72"/>
    </location>
    <ligand>
        <name>Zn(2+)</name>
        <dbReference type="ChEBI" id="CHEBI:29105"/>
        <label>1</label>
    </ligand>
</feature>
<feature type="binding site" evidence="1">
    <location>
        <position position="85"/>
    </location>
    <ligand>
        <name>Zn(2+)</name>
        <dbReference type="ChEBI" id="CHEBI:29105"/>
        <label>1</label>
    </ligand>
</feature>
<feature type="binding site" evidence="1">
    <location>
        <position position="88"/>
    </location>
    <ligand>
        <name>Zn(2+)</name>
        <dbReference type="ChEBI" id="CHEBI:29105"/>
        <label>1</label>
    </ligand>
</feature>
<feature type="binding site" evidence="1">
    <location>
        <position position="460"/>
    </location>
    <ligand>
        <name>Mg(2+)</name>
        <dbReference type="ChEBI" id="CHEBI:18420"/>
    </ligand>
</feature>
<feature type="binding site" evidence="1">
    <location>
        <position position="462"/>
    </location>
    <ligand>
        <name>Mg(2+)</name>
        <dbReference type="ChEBI" id="CHEBI:18420"/>
    </ligand>
</feature>
<feature type="binding site" evidence="1">
    <location>
        <position position="464"/>
    </location>
    <ligand>
        <name>Mg(2+)</name>
        <dbReference type="ChEBI" id="CHEBI:18420"/>
    </ligand>
</feature>
<feature type="binding site" evidence="1">
    <location>
        <position position="808"/>
    </location>
    <ligand>
        <name>Zn(2+)</name>
        <dbReference type="ChEBI" id="CHEBI:29105"/>
        <label>2</label>
    </ligand>
</feature>
<feature type="binding site" evidence="1">
    <location>
        <position position="882"/>
    </location>
    <ligand>
        <name>Zn(2+)</name>
        <dbReference type="ChEBI" id="CHEBI:29105"/>
        <label>2</label>
    </ligand>
</feature>
<feature type="binding site" evidence="1">
    <location>
        <position position="889"/>
    </location>
    <ligand>
        <name>Zn(2+)</name>
        <dbReference type="ChEBI" id="CHEBI:29105"/>
        <label>2</label>
    </ligand>
</feature>
<feature type="binding site" evidence="1">
    <location>
        <position position="892"/>
    </location>
    <ligand>
        <name>Zn(2+)</name>
        <dbReference type="ChEBI" id="CHEBI:29105"/>
        <label>2</label>
    </ligand>
</feature>
<name>RPOC_LEGPH</name>
<proteinExistence type="inferred from homology"/>
<keyword id="KW-0240">DNA-directed RNA polymerase</keyword>
<keyword id="KW-0460">Magnesium</keyword>
<keyword id="KW-0479">Metal-binding</keyword>
<keyword id="KW-0548">Nucleotidyltransferase</keyword>
<keyword id="KW-1185">Reference proteome</keyword>
<keyword id="KW-0804">Transcription</keyword>
<keyword id="KW-0808">Transferase</keyword>
<keyword id="KW-0862">Zinc</keyword>
<organism>
    <name type="scientific">Legionella pneumophila subsp. pneumophila (strain Philadelphia 1 / ATCC 33152 / DSM 7513)</name>
    <dbReference type="NCBI Taxonomy" id="272624"/>
    <lineage>
        <taxon>Bacteria</taxon>
        <taxon>Pseudomonadati</taxon>
        <taxon>Pseudomonadota</taxon>
        <taxon>Gammaproteobacteria</taxon>
        <taxon>Legionellales</taxon>
        <taxon>Legionellaceae</taxon>
        <taxon>Legionella</taxon>
    </lineage>
</organism>